<reference key="1">
    <citation type="submission" date="1998-04" db="EMBL/GenBank/DDBJ databases">
        <authorList>
            <person name="Hauser C.R."/>
            <person name="Boynton J.E."/>
            <person name="Gillham N.W."/>
        </authorList>
    </citation>
    <scope>NUCLEOTIDE SEQUENCE [GENOMIC DNA]</scope>
</reference>
<reference key="2">
    <citation type="journal article" date="2009" name="BMC Evol. Biol.">
        <title>Nucleotide diversity of the Chlamydomonas reinhardtii plastid genome: addressing the mutational-hazard hypothesis.</title>
        <authorList>
            <person name="Smith D.R."/>
            <person name="Lee R.W."/>
        </authorList>
    </citation>
    <scope>NUCLEOTIDE SEQUENCE [LARGE SCALE GENOMIC DNA]</scope>
    <source>
        <strain>CC-503</strain>
    </source>
</reference>
<reference key="3">
    <citation type="journal article" date="1995" name="FEBS Lett.">
        <title>Isolation of CF0CF1 from Chlamydomonas reinhardtii cw15 and the N-terminal amino acid sequences of the CF0CF1 subunits.</title>
        <authorList>
            <person name="Fiedler H.R."/>
            <person name="Schmid R."/>
            <person name="Leu S."/>
            <person name="Shavit N."/>
            <person name="Strotmann H."/>
        </authorList>
    </citation>
    <scope>PROTEIN SEQUENCE OF 9-19</scope>
    <scope>FUNCTION</scope>
    <scope>SUBUNIT</scope>
    <scope>SUBCELLULAR LOCATION</scope>
    <source>
        <strain>cw15</strain>
    </source>
</reference>
<reference key="4">
    <citation type="journal article" date="2002" name="Plant Cell">
        <title>The Chlamydomonas reinhardtii plastid chromosome: islands of genes in a sea of repeats.</title>
        <authorList>
            <person name="Maul J.E."/>
            <person name="Lilly J.W."/>
            <person name="Cui L."/>
            <person name="dePamphilis C.W."/>
            <person name="Miller W."/>
            <person name="Harris E.H."/>
            <person name="Stern D.B."/>
        </authorList>
    </citation>
    <scope>IDENTIFICATION</scope>
    <scope>COMPLETE PLASTID GENOME</scope>
</reference>
<dbReference type="EMBL" id="AF061851">
    <property type="protein sequence ID" value="AAC16328.1"/>
    <property type="molecule type" value="Genomic_DNA"/>
</dbReference>
<dbReference type="EMBL" id="FJ423446">
    <property type="protein sequence ID" value="ACJ50149.1"/>
    <property type="molecule type" value="Genomic_DNA"/>
</dbReference>
<dbReference type="EMBL" id="BK000554">
    <property type="protein sequence ID" value="DAA00962.1"/>
    <property type="molecule type" value="Genomic_DNA"/>
</dbReference>
<dbReference type="PIR" id="T07955">
    <property type="entry name" value="T07955"/>
</dbReference>
<dbReference type="RefSeq" id="NP_958418.1">
    <property type="nucleotide sequence ID" value="NC_005353.1"/>
</dbReference>
<dbReference type="SMR" id="O63075"/>
<dbReference type="FunCoup" id="O63075">
    <property type="interactions" value="104"/>
</dbReference>
<dbReference type="STRING" id="3055.O63075"/>
<dbReference type="PaxDb" id="3055-DAA00962"/>
<dbReference type="GeneID" id="2716959"/>
<dbReference type="KEGG" id="cre:ChreCp062"/>
<dbReference type="eggNOG" id="KOG4665">
    <property type="taxonomic scope" value="Eukaryota"/>
</dbReference>
<dbReference type="HOGENOM" id="CLU_041018_2_4_1"/>
<dbReference type="InParanoid" id="O63075"/>
<dbReference type="BioCyc" id="CHLAMY:CHRECP062-MONOMER"/>
<dbReference type="Proteomes" id="UP000006906">
    <property type="component" value="Chloroplast"/>
</dbReference>
<dbReference type="GO" id="GO:0009535">
    <property type="term" value="C:chloroplast thylakoid membrane"/>
    <property type="evidence" value="ECO:0007669"/>
    <property type="project" value="UniProtKB-SubCell"/>
</dbReference>
<dbReference type="GO" id="GO:0005886">
    <property type="term" value="C:plasma membrane"/>
    <property type="evidence" value="ECO:0007669"/>
    <property type="project" value="UniProtKB-UniRule"/>
</dbReference>
<dbReference type="GO" id="GO:0045259">
    <property type="term" value="C:proton-transporting ATP synthase complex"/>
    <property type="evidence" value="ECO:0007669"/>
    <property type="project" value="UniProtKB-KW"/>
</dbReference>
<dbReference type="GO" id="GO:0046933">
    <property type="term" value="F:proton-transporting ATP synthase activity, rotational mechanism"/>
    <property type="evidence" value="ECO:0007669"/>
    <property type="project" value="UniProtKB-UniRule"/>
</dbReference>
<dbReference type="CDD" id="cd00310">
    <property type="entry name" value="ATP-synt_Fo_a_6"/>
    <property type="match status" value="1"/>
</dbReference>
<dbReference type="FunFam" id="1.20.120.220:FF:000001">
    <property type="entry name" value="ATP synthase subunit a, chloroplastic"/>
    <property type="match status" value="1"/>
</dbReference>
<dbReference type="Gene3D" id="1.20.120.220">
    <property type="entry name" value="ATP synthase, F0 complex, subunit A"/>
    <property type="match status" value="1"/>
</dbReference>
<dbReference type="HAMAP" id="MF_01393">
    <property type="entry name" value="ATP_synth_a_bact"/>
    <property type="match status" value="1"/>
</dbReference>
<dbReference type="InterPro" id="IPR045082">
    <property type="entry name" value="ATP_syn_F0_a_bact/chloroplast"/>
</dbReference>
<dbReference type="InterPro" id="IPR000568">
    <property type="entry name" value="ATP_synth_F0_asu"/>
</dbReference>
<dbReference type="InterPro" id="IPR023011">
    <property type="entry name" value="ATP_synth_F0_asu_AS"/>
</dbReference>
<dbReference type="InterPro" id="IPR035908">
    <property type="entry name" value="F0_ATP_A_sf"/>
</dbReference>
<dbReference type="NCBIfam" id="TIGR01131">
    <property type="entry name" value="ATP_synt_6_or_A"/>
    <property type="match status" value="1"/>
</dbReference>
<dbReference type="PANTHER" id="PTHR42823">
    <property type="entry name" value="ATP SYNTHASE SUBUNIT A, CHLOROPLASTIC"/>
    <property type="match status" value="1"/>
</dbReference>
<dbReference type="PANTHER" id="PTHR42823:SF3">
    <property type="entry name" value="ATP SYNTHASE SUBUNIT A, CHLOROPLASTIC"/>
    <property type="match status" value="1"/>
</dbReference>
<dbReference type="Pfam" id="PF00119">
    <property type="entry name" value="ATP-synt_A"/>
    <property type="match status" value="1"/>
</dbReference>
<dbReference type="PRINTS" id="PR00123">
    <property type="entry name" value="ATPASEA"/>
</dbReference>
<dbReference type="SUPFAM" id="SSF81336">
    <property type="entry name" value="F1F0 ATP synthase subunit A"/>
    <property type="match status" value="1"/>
</dbReference>
<dbReference type="PROSITE" id="PS00449">
    <property type="entry name" value="ATPASE_A"/>
    <property type="match status" value="1"/>
</dbReference>
<proteinExistence type="evidence at protein level"/>
<protein>
    <recommendedName>
        <fullName evidence="1 3">ATP synthase subunit a, chloroplastic</fullName>
    </recommendedName>
    <alternativeName>
        <fullName evidence="1">ATP synthase F0 sector subunit a</fullName>
    </alternativeName>
    <alternativeName>
        <fullName evidence="1">F-ATPase subunit IV</fullName>
    </alternativeName>
</protein>
<organism>
    <name type="scientific">Chlamydomonas reinhardtii</name>
    <name type="common">Chlamydomonas smithii</name>
    <dbReference type="NCBI Taxonomy" id="3055"/>
    <lineage>
        <taxon>Eukaryota</taxon>
        <taxon>Viridiplantae</taxon>
        <taxon>Chlorophyta</taxon>
        <taxon>core chlorophytes</taxon>
        <taxon>Chlorophyceae</taxon>
        <taxon>CS clade</taxon>
        <taxon>Chlamydomonadales</taxon>
        <taxon>Chlamydomonadaceae</taxon>
        <taxon>Chlamydomonas</taxon>
    </lineage>
</organism>
<evidence type="ECO:0000255" key="1">
    <source>
        <dbReference type="HAMAP-Rule" id="MF_01393"/>
    </source>
</evidence>
<evidence type="ECO:0000269" key="2">
    <source>
    </source>
</evidence>
<evidence type="ECO:0000303" key="3">
    <source>
    </source>
</evidence>
<evidence type="ECO:0000305" key="4"/>
<comment type="function">
    <text evidence="2">F(1)F(0) ATP synthase produces ATP from ADP in the presence of a proton or sodium gradient. F-type ATPases consist of two structural domains, F(1) containing the extramembraneous catalytic core and F(0) containing the membrane proton channel, linked together by a central stalk and a peripheral stalk. During catalysis, ATP synthesis in the catalytic domain of F(1) is coupled via a rotary mechanism of the central stalk subunits to proton translocation.</text>
</comment>
<comment type="subunit">
    <text evidence="2">F-type ATPases have 2 components, F(1) - the catalytic core - and F(0) - the membrane proton channel. F(1) has five subunits: alpha(3), beta(3), gamma(1), delta(1), epsilon(1). F(0) has four main subunits: a(1), b(1), b'(1) and c(10-14). The alpha and beta chains form an alternating ring which encloses part of the gamma chain. F(1) is attached to F(0) by a central stalk formed by the gamma and epsilon chains, while a peripheral stalk is formed by the delta, b and b' chains.</text>
</comment>
<comment type="subcellular location">
    <subcellularLocation>
        <location evidence="1 2">Plastid</location>
        <location evidence="1 2">Chloroplast thylakoid membrane</location>
        <topology evidence="1">Multi-pass membrane protein</topology>
    </subcellularLocation>
</comment>
<comment type="miscellaneous">
    <text evidence="4">In plastids the F-type ATPase is also known as CF(1)CF(0).</text>
</comment>
<comment type="similarity">
    <text evidence="1">Belongs to the ATPase A chain family.</text>
</comment>
<sequence>MNPLLEIAEVSVGQHYYWELGGYELHGQVLITSWVVLGILAVLSFLGNTNLKSTPDGFQNFTELVTEFIRDLAKTQIGEEDYLKWVPFLGTIFLFIFVSNWSGALLPYRLIEIPNGELAAPTNDINTTVALALLTSISYFYAGISKKGLGYFSRYVEPAAFLLPINVLEDFTKPLSLSFRLFGNILADELVVGVLVALVPLIIPIPIMLLGVFTSAIQALVFATLAGAYINEALADHH</sequence>
<feature type="chain" id="PRO_0000002580" description="ATP synthase subunit a, chloroplastic">
    <location>
        <begin position="1"/>
        <end position="238"/>
    </location>
</feature>
<feature type="transmembrane region" description="Helical" evidence="1">
    <location>
        <begin position="27"/>
        <end position="47"/>
    </location>
</feature>
<feature type="transmembrane region" description="Helical" evidence="1">
    <location>
        <begin position="86"/>
        <end position="106"/>
    </location>
</feature>
<feature type="transmembrane region" description="Helical" evidence="1">
    <location>
        <begin position="125"/>
        <end position="145"/>
    </location>
</feature>
<feature type="transmembrane region" description="Helical" evidence="1">
    <location>
        <begin position="190"/>
        <end position="210"/>
    </location>
</feature>
<feature type="transmembrane region" description="Helical" evidence="1">
    <location>
        <begin position="211"/>
        <end position="231"/>
    </location>
</feature>
<feature type="sequence variant" description="In strain: CC-503.">
    <original>T</original>
    <variation>S</variation>
    <location>
        <position position="49"/>
    </location>
</feature>
<feature type="sequence variant" description="In strain: CC-503.">
    <original>N</original>
    <variation>G</variation>
    <location>
        <position position="231"/>
    </location>
</feature>
<name>ATPI_CHLRE</name>
<accession>O63075</accession>
<accession>B7U1K2</accession>
<gene>
    <name evidence="1" type="primary">atpI</name>
</gene>
<keyword id="KW-0066">ATP synthesis</keyword>
<keyword id="KW-0138">CF(0)</keyword>
<keyword id="KW-0150">Chloroplast</keyword>
<keyword id="KW-0903">Direct protein sequencing</keyword>
<keyword id="KW-0375">Hydrogen ion transport</keyword>
<keyword id="KW-0406">Ion transport</keyword>
<keyword id="KW-0472">Membrane</keyword>
<keyword id="KW-0934">Plastid</keyword>
<keyword id="KW-1185">Reference proteome</keyword>
<keyword id="KW-0793">Thylakoid</keyword>
<keyword id="KW-0812">Transmembrane</keyword>
<keyword id="KW-1133">Transmembrane helix</keyword>
<keyword id="KW-0813">Transport</keyword>
<geneLocation type="chloroplast"/>